<reference key="1">
    <citation type="journal article" date="2008" name="J. Bacteriol.">
        <title>Complete genome sequence of the soil actinomycete Kocuria rhizophila.</title>
        <authorList>
            <person name="Takarada H."/>
            <person name="Sekine M."/>
            <person name="Kosugi H."/>
            <person name="Matsuo Y."/>
            <person name="Fujisawa T."/>
            <person name="Omata S."/>
            <person name="Kishi E."/>
            <person name="Shimizu A."/>
            <person name="Tsukatani N."/>
            <person name="Tanikawa S."/>
            <person name="Fujita N."/>
            <person name="Harayama S."/>
        </authorList>
    </citation>
    <scope>NUCLEOTIDE SEQUENCE [LARGE SCALE GENOMIC DNA]</scope>
    <source>
        <strain>ATCC 9341 / DSM 348 / NBRC 103217 / DC2201</strain>
    </source>
</reference>
<gene>
    <name evidence="1" type="primary">trhO</name>
    <name type="ordered locus">KRH_07940</name>
</gene>
<sequence length="296" mass="32959">MSVPKIVLFYVFTPLADPEAVKLWQLNLAQRSGVKGRIIVSEQGINATVGGDIHDVKAYVRGLKEYAPFQHADIKWSDGAGDDFPRLSVKVRPELVTFDAPDLIRVTEHGVEGGGTHLTPHEVHELVERRGEDVVFFDGRNQLEAEIGRFRGAVVPRTETTRDFLRELDSGAYDHLKDKALVTYCTGGIRCEVLSGLLRNRGFRDVYQLDGGIVRYGEAYGDRGLWDGSLYVFDERRHMEFSLSARSLGRCVQCGEATPRYVNCANQQCRRLFLCCETCTGAGARTRCADCVPVAA</sequence>
<name>TRHO_KOCRD</name>
<organism>
    <name type="scientific">Kocuria rhizophila (strain ATCC 9341 / DSM 348 / NBRC 103217 / DC2201)</name>
    <dbReference type="NCBI Taxonomy" id="378753"/>
    <lineage>
        <taxon>Bacteria</taxon>
        <taxon>Bacillati</taxon>
        <taxon>Actinomycetota</taxon>
        <taxon>Actinomycetes</taxon>
        <taxon>Micrococcales</taxon>
        <taxon>Micrococcaceae</taxon>
        <taxon>Kocuria</taxon>
    </lineage>
</organism>
<proteinExistence type="inferred from homology"/>
<accession>B2GKC1</accession>
<evidence type="ECO:0000255" key="1">
    <source>
        <dbReference type="HAMAP-Rule" id="MF_00469"/>
    </source>
</evidence>
<protein>
    <recommendedName>
        <fullName evidence="1">tRNA uridine(34) hydroxylase</fullName>
        <ecNumber evidence="1">1.14.-.-</ecNumber>
    </recommendedName>
    <alternativeName>
        <fullName evidence="1">tRNA hydroxylation protein O</fullName>
    </alternativeName>
</protein>
<comment type="function">
    <text evidence="1">Catalyzes oxygen-dependent 5-hydroxyuridine (ho5U) modification at position 34 in tRNAs.</text>
</comment>
<comment type="catalytic activity">
    <reaction evidence="1">
        <text>uridine(34) in tRNA + AH2 + O2 = 5-hydroxyuridine(34) in tRNA + A + H2O</text>
        <dbReference type="Rhea" id="RHEA:64224"/>
        <dbReference type="Rhea" id="RHEA-COMP:11727"/>
        <dbReference type="Rhea" id="RHEA-COMP:13381"/>
        <dbReference type="ChEBI" id="CHEBI:13193"/>
        <dbReference type="ChEBI" id="CHEBI:15377"/>
        <dbReference type="ChEBI" id="CHEBI:15379"/>
        <dbReference type="ChEBI" id="CHEBI:17499"/>
        <dbReference type="ChEBI" id="CHEBI:65315"/>
        <dbReference type="ChEBI" id="CHEBI:136877"/>
    </reaction>
</comment>
<comment type="similarity">
    <text evidence="1">Belongs to the TrhO family.</text>
</comment>
<dbReference type="EC" id="1.14.-.-" evidence="1"/>
<dbReference type="EMBL" id="AP009152">
    <property type="protein sequence ID" value="BAG29141.1"/>
    <property type="molecule type" value="Genomic_DNA"/>
</dbReference>
<dbReference type="RefSeq" id="WP_012397862.1">
    <property type="nucleotide sequence ID" value="NC_010617.1"/>
</dbReference>
<dbReference type="SMR" id="B2GKC1"/>
<dbReference type="STRING" id="378753.KRH_07940"/>
<dbReference type="KEGG" id="krh:KRH_07940"/>
<dbReference type="eggNOG" id="COG1054">
    <property type="taxonomic scope" value="Bacteria"/>
</dbReference>
<dbReference type="HOGENOM" id="CLU_038878_1_0_11"/>
<dbReference type="OrthoDB" id="9778326at2"/>
<dbReference type="Proteomes" id="UP000008838">
    <property type="component" value="Chromosome"/>
</dbReference>
<dbReference type="GO" id="GO:0016705">
    <property type="term" value="F:oxidoreductase activity, acting on paired donors, with incorporation or reduction of molecular oxygen"/>
    <property type="evidence" value="ECO:0007669"/>
    <property type="project" value="UniProtKB-UniRule"/>
</dbReference>
<dbReference type="GO" id="GO:0006400">
    <property type="term" value="P:tRNA modification"/>
    <property type="evidence" value="ECO:0007669"/>
    <property type="project" value="UniProtKB-UniRule"/>
</dbReference>
<dbReference type="CDD" id="cd01518">
    <property type="entry name" value="RHOD_YceA"/>
    <property type="match status" value="1"/>
</dbReference>
<dbReference type="Gene3D" id="3.30.70.100">
    <property type="match status" value="1"/>
</dbReference>
<dbReference type="Gene3D" id="3.40.250.10">
    <property type="entry name" value="Rhodanese-like domain"/>
    <property type="match status" value="1"/>
</dbReference>
<dbReference type="HAMAP" id="MF_00469">
    <property type="entry name" value="TrhO"/>
    <property type="match status" value="1"/>
</dbReference>
<dbReference type="InterPro" id="IPR001763">
    <property type="entry name" value="Rhodanese-like_dom"/>
</dbReference>
<dbReference type="InterPro" id="IPR036873">
    <property type="entry name" value="Rhodanese-like_dom_sf"/>
</dbReference>
<dbReference type="InterPro" id="IPR022111">
    <property type="entry name" value="Rhodanese_C"/>
</dbReference>
<dbReference type="InterPro" id="IPR020936">
    <property type="entry name" value="TrhO"/>
</dbReference>
<dbReference type="InterPro" id="IPR040503">
    <property type="entry name" value="TRHO_N"/>
</dbReference>
<dbReference type="NCBIfam" id="NF001134">
    <property type="entry name" value="PRK00142.1-2"/>
    <property type="match status" value="1"/>
</dbReference>
<dbReference type="PANTHER" id="PTHR43268">
    <property type="entry name" value="THIOSULFATE SULFURTRANSFERASE/RHODANESE-LIKE DOMAIN-CONTAINING PROTEIN 2"/>
    <property type="match status" value="1"/>
</dbReference>
<dbReference type="PANTHER" id="PTHR43268:SF6">
    <property type="entry name" value="THIOSULFATE SULFURTRANSFERASE_RHODANESE-LIKE DOMAIN-CONTAINING PROTEIN 2"/>
    <property type="match status" value="1"/>
</dbReference>
<dbReference type="Pfam" id="PF00581">
    <property type="entry name" value="Rhodanese"/>
    <property type="match status" value="1"/>
</dbReference>
<dbReference type="Pfam" id="PF12368">
    <property type="entry name" value="Rhodanese_C"/>
    <property type="match status" value="1"/>
</dbReference>
<dbReference type="Pfam" id="PF17773">
    <property type="entry name" value="UPF0176_N"/>
    <property type="match status" value="1"/>
</dbReference>
<dbReference type="SMART" id="SM00450">
    <property type="entry name" value="RHOD"/>
    <property type="match status" value="1"/>
</dbReference>
<dbReference type="SUPFAM" id="SSF52821">
    <property type="entry name" value="Rhodanese/Cell cycle control phosphatase"/>
    <property type="match status" value="1"/>
</dbReference>
<dbReference type="PROSITE" id="PS50206">
    <property type="entry name" value="RHODANESE_3"/>
    <property type="match status" value="1"/>
</dbReference>
<feature type="chain" id="PRO_1000200364" description="tRNA uridine(34) hydroxylase">
    <location>
        <begin position="1"/>
        <end position="296"/>
    </location>
</feature>
<feature type="domain" description="Rhodanese" evidence="1">
    <location>
        <begin position="130"/>
        <end position="225"/>
    </location>
</feature>
<feature type="active site" description="Cysteine persulfide intermediate" evidence="1">
    <location>
        <position position="185"/>
    </location>
</feature>
<keyword id="KW-0560">Oxidoreductase</keyword>
<keyword id="KW-1185">Reference proteome</keyword>
<keyword id="KW-0819">tRNA processing</keyword>